<reference key="1">
    <citation type="journal article" date="2006" name="Nat. Biotechnol.">
        <title>Genome sequence of the ubiquitous hydrocarbon-degrading marine bacterium Alcanivorax borkumensis.</title>
        <authorList>
            <person name="Schneiker S."/>
            <person name="Martins dos Santos V.A.P."/>
            <person name="Bartels D."/>
            <person name="Bekel T."/>
            <person name="Brecht M."/>
            <person name="Buhrmester J."/>
            <person name="Chernikova T.N."/>
            <person name="Denaro R."/>
            <person name="Ferrer M."/>
            <person name="Gertler C."/>
            <person name="Goesmann A."/>
            <person name="Golyshina O.V."/>
            <person name="Kaminski F."/>
            <person name="Khachane A.N."/>
            <person name="Lang S."/>
            <person name="Linke B."/>
            <person name="McHardy A.C."/>
            <person name="Meyer F."/>
            <person name="Nechitaylo T."/>
            <person name="Puehler A."/>
            <person name="Regenhardt D."/>
            <person name="Rupp O."/>
            <person name="Sabirova J.S."/>
            <person name="Selbitschka W."/>
            <person name="Yakimov M.M."/>
            <person name="Timmis K.N."/>
            <person name="Vorhoelter F.-J."/>
            <person name="Weidner S."/>
            <person name="Kaiser O."/>
            <person name="Golyshin P.N."/>
        </authorList>
    </citation>
    <scope>NUCLEOTIDE SEQUENCE [LARGE SCALE GENOMIC DNA]</scope>
    <source>
        <strain>ATCC 700651 / DSM 11573 / NCIMB 13689 / SK2</strain>
    </source>
</reference>
<dbReference type="EMBL" id="AM286690">
    <property type="protein sequence ID" value="CAL16246.1"/>
    <property type="molecule type" value="Genomic_DNA"/>
</dbReference>
<dbReference type="RefSeq" id="WP_011588082.1">
    <property type="nucleotide sequence ID" value="NC_008260.1"/>
</dbReference>
<dbReference type="SMR" id="Q0VRF2"/>
<dbReference type="STRING" id="393595.ABO_0798"/>
<dbReference type="KEGG" id="abo:ABO_0798"/>
<dbReference type="eggNOG" id="COG0228">
    <property type="taxonomic scope" value="Bacteria"/>
</dbReference>
<dbReference type="HOGENOM" id="CLU_100590_5_1_6"/>
<dbReference type="OrthoDB" id="9807878at2"/>
<dbReference type="Proteomes" id="UP000008871">
    <property type="component" value="Chromosome"/>
</dbReference>
<dbReference type="GO" id="GO:0005737">
    <property type="term" value="C:cytoplasm"/>
    <property type="evidence" value="ECO:0007669"/>
    <property type="project" value="UniProtKB-ARBA"/>
</dbReference>
<dbReference type="GO" id="GO:0015935">
    <property type="term" value="C:small ribosomal subunit"/>
    <property type="evidence" value="ECO:0007669"/>
    <property type="project" value="TreeGrafter"/>
</dbReference>
<dbReference type="GO" id="GO:0003735">
    <property type="term" value="F:structural constituent of ribosome"/>
    <property type="evidence" value="ECO:0007669"/>
    <property type="project" value="InterPro"/>
</dbReference>
<dbReference type="GO" id="GO:0006412">
    <property type="term" value="P:translation"/>
    <property type="evidence" value="ECO:0007669"/>
    <property type="project" value="UniProtKB-UniRule"/>
</dbReference>
<dbReference type="Gene3D" id="3.30.1320.10">
    <property type="match status" value="1"/>
</dbReference>
<dbReference type="HAMAP" id="MF_00385">
    <property type="entry name" value="Ribosomal_bS16"/>
    <property type="match status" value="1"/>
</dbReference>
<dbReference type="InterPro" id="IPR000307">
    <property type="entry name" value="Ribosomal_bS16"/>
</dbReference>
<dbReference type="InterPro" id="IPR023803">
    <property type="entry name" value="Ribosomal_bS16_dom_sf"/>
</dbReference>
<dbReference type="NCBIfam" id="TIGR00002">
    <property type="entry name" value="S16"/>
    <property type="match status" value="1"/>
</dbReference>
<dbReference type="PANTHER" id="PTHR12919">
    <property type="entry name" value="30S RIBOSOMAL PROTEIN S16"/>
    <property type="match status" value="1"/>
</dbReference>
<dbReference type="PANTHER" id="PTHR12919:SF20">
    <property type="entry name" value="SMALL RIBOSOMAL SUBUNIT PROTEIN BS16M"/>
    <property type="match status" value="1"/>
</dbReference>
<dbReference type="Pfam" id="PF00886">
    <property type="entry name" value="Ribosomal_S16"/>
    <property type="match status" value="1"/>
</dbReference>
<dbReference type="SUPFAM" id="SSF54565">
    <property type="entry name" value="Ribosomal protein S16"/>
    <property type="match status" value="1"/>
</dbReference>
<sequence>MVVIRLARGGSKKRPFYSIVVADSRYARDGRFIEQLGFYNPIARGGEIPLKLNLESLDAWVAKGAQLSDRVKTLAKQARKAA</sequence>
<feature type="chain" id="PRO_1000049209" description="Small ribosomal subunit protein bS16">
    <location>
        <begin position="1"/>
        <end position="82"/>
    </location>
</feature>
<gene>
    <name evidence="1" type="primary">rpsP</name>
    <name type="ordered locus">ABO_0798</name>
</gene>
<evidence type="ECO:0000255" key="1">
    <source>
        <dbReference type="HAMAP-Rule" id="MF_00385"/>
    </source>
</evidence>
<evidence type="ECO:0000305" key="2"/>
<organism>
    <name type="scientific">Alcanivorax borkumensis (strain ATCC 700651 / DSM 11573 / NCIMB 13689 / SK2)</name>
    <dbReference type="NCBI Taxonomy" id="393595"/>
    <lineage>
        <taxon>Bacteria</taxon>
        <taxon>Pseudomonadati</taxon>
        <taxon>Pseudomonadota</taxon>
        <taxon>Gammaproteobacteria</taxon>
        <taxon>Oceanospirillales</taxon>
        <taxon>Alcanivoracaceae</taxon>
        <taxon>Alcanivorax</taxon>
    </lineage>
</organism>
<protein>
    <recommendedName>
        <fullName evidence="1">Small ribosomal subunit protein bS16</fullName>
    </recommendedName>
    <alternativeName>
        <fullName evidence="2">30S ribosomal protein S16</fullName>
    </alternativeName>
</protein>
<keyword id="KW-1185">Reference proteome</keyword>
<keyword id="KW-0687">Ribonucleoprotein</keyword>
<keyword id="KW-0689">Ribosomal protein</keyword>
<proteinExistence type="inferred from homology"/>
<accession>Q0VRF2</accession>
<name>RS16_ALCBS</name>
<comment type="similarity">
    <text evidence="1">Belongs to the bacterial ribosomal protein bS16 family.</text>
</comment>